<comment type="catalytic activity">
    <reaction evidence="7">
        <text>Hydrolysis of terminal non-reducing beta-D-fructofuranoside residues in beta-D-fructofuranosides.</text>
        <dbReference type="EC" id="3.2.1.26"/>
    </reaction>
</comment>
<comment type="pathway">
    <text evidence="9">Glycan biosynthesis; sucrose metabolism.</text>
</comment>
<comment type="subunit">
    <text evidence="1">May be present in two forms, a 70 kDa monomer and a heterodimer of the 30 kDa and 38 kDa subunits. The ratio of the levels of the two forms within cells appears to be regulated developmentally (By similarity).</text>
</comment>
<comment type="subcellular location">
    <subcellularLocation>
        <location evidence="5">Membrane</location>
        <topology evidence="5">Single-pass type II membrane protein</topology>
    </subcellularLocation>
    <subcellularLocation>
        <location evidence="3">Vacuole lumen</location>
    </subcellularLocation>
    <text evidence="3">May be released into the lumen of the vacuole from the tonoplast through a proteolytic processing.</text>
</comment>
<comment type="similarity">
    <text evidence="9">Belongs to the glycosyl hydrolase 32 family.</text>
</comment>
<accession>O24509</accession>
<proteinExistence type="evidence at transcript level"/>
<organism>
    <name type="scientific">Phaseolus vulgaris</name>
    <name type="common">Kidney bean</name>
    <name type="synonym">French bean</name>
    <dbReference type="NCBI Taxonomy" id="3885"/>
    <lineage>
        <taxon>Eukaryota</taxon>
        <taxon>Viridiplantae</taxon>
        <taxon>Streptophyta</taxon>
        <taxon>Embryophyta</taxon>
        <taxon>Tracheophyta</taxon>
        <taxon>Spermatophyta</taxon>
        <taxon>Magnoliopsida</taxon>
        <taxon>eudicotyledons</taxon>
        <taxon>Gunneridae</taxon>
        <taxon>Pentapetalae</taxon>
        <taxon>rosids</taxon>
        <taxon>fabids</taxon>
        <taxon>Fabales</taxon>
        <taxon>Fabaceae</taxon>
        <taxon>Papilionoideae</taxon>
        <taxon>50 kb inversion clade</taxon>
        <taxon>NPAAA clade</taxon>
        <taxon>indigoferoid/millettioid clade</taxon>
        <taxon>Phaseoleae</taxon>
        <taxon>Phaseolus</taxon>
    </lineage>
</organism>
<dbReference type="EC" id="3.2.1.26"/>
<dbReference type="EMBL" id="U92438">
    <property type="protein sequence ID" value="AAB68679.1"/>
    <property type="molecule type" value="mRNA"/>
</dbReference>
<dbReference type="PIR" id="T12083">
    <property type="entry name" value="T12083"/>
</dbReference>
<dbReference type="SMR" id="O24509"/>
<dbReference type="CAZy" id="GH32">
    <property type="family name" value="Glycoside Hydrolase Family 32"/>
</dbReference>
<dbReference type="eggNOG" id="KOG0228">
    <property type="taxonomic scope" value="Eukaryota"/>
</dbReference>
<dbReference type="UniPathway" id="UPA00238"/>
<dbReference type="GO" id="GO:0016020">
    <property type="term" value="C:membrane"/>
    <property type="evidence" value="ECO:0007669"/>
    <property type="project" value="UniProtKB-SubCell"/>
</dbReference>
<dbReference type="GO" id="GO:0005775">
    <property type="term" value="C:vacuolar lumen"/>
    <property type="evidence" value="ECO:0007669"/>
    <property type="project" value="UniProtKB-SubCell"/>
</dbReference>
<dbReference type="GO" id="GO:0004564">
    <property type="term" value="F:beta-fructofuranosidase activity"/>
    <property type="evidence" value="ECO:0007669"/>
    <property type="project" value="UniProtKB-EC"/>
</dbReference>
<dbReference type="GO" id="GO:0005985">
    <property type="term" value="P:sucrose metabolic process"/>
    <property type="evidence" value="ECO:0007669"/>
    <property type="project" value="UniProtKB-UniPathway"/>
</dbReference>
<dbReference type="CDD" id="cd18624">
    <property type="entry name" value="GH32_Fruct1-like"/>
    <property type="match status" value="1"/>
</dbReference>
<dbReference type="FunFam" id="2.115.10.20:FF:000001">
    <property type="entry name" value="Beta-fructofuranosidase, insoluble isoenzyme CWINV1"/>
    <property type="match status" value="1"/>
</dbReference>
<dbReference type="FunFam" id="2.60.120.560:FF:000002">
    <property type="entry name" value="Beta-fructofuranosidase, insoluble isoenzyme CWINV1"/>
    <property type="match status" value="1"/>
</dbReference>
<dbReference type="Gene3D" id="2.60.120.560">
    <property type="entry name" value="Exo-inulinase, domain 1"/>
    <property type="match status" value="1"/>
</dbReference>
<dbReference type="Gene3D" id="2.115.10.20">
    <property type="entry name" value="Glycosyl hydrolase domain, family 43"/>
    <property type="match status" value="1"/>
</dbReference>
<dbReference type="InterPro" id="IPR021792">
    <property type="entry name" value="Beta-fructofuranosidase_N"/>
</dbReference>
<dbReference type="InterPro" id="IPR013320">
    <property type="entry name" value="ConA-like_dom_sf"/>
</dbReference>
<dbReference type="InterPro" id="IPR050551">
    <property type="entry name" value="Fructan_Metab_Enzymes"/>
</dbReference>
<dbReference type="InterPro" id="IPR001362">
    <property type="entry name" value="Glyco_hydro_32"/>
</dbReference>
<dbReference type="InterPro" id="IPR018053">
    <property type="entry name" value="Glyco_hydro_32_AS"/>
</dbReference>
<dbReference type="InterPro" id="IPR013189">
    <property type="entry name" value="Glyco_hydro_32_C"/>
</dbReference>
<dbReference type="InterPro" id="IPR013148">
    <property type="entry name" value="Glyco_hydro_32_N"/>
</dbReference>
<dbReference type="InterPro" id="IPR023296">
    <property type="entry name" value="Glyco_hydro_beta-prop_sf"/>
</dbReference>
<dbReference type="PANTHER" id="PTHR31953">
    <property type="entry name" value="BETA-FRUCTOFURANOSIDASE, INSOLUBLE ISOENZYME CWINV1-RELATED"/>
    <property type="match status" value="1"/>
</dbReference>
<dbReference type="Pfam" id="PF08244">
    <property type="entry name" value="Glyco_hydro_32C"/>
    <property type="match status" value="1"/>
</dbReference>
<dbReference type="Pfam" id="PF00251">
    <property type="entry name" value="Glyco_hydro_32N"/>
    <property type="match status" value="1"/>
</dbReference>
<dbReference type="Pfam" id="PF11837">
    <property type="entry name" value="INV_N"/>
    <property type="match status" value="1"/>
</dbReference>
<dbReference type="SMART" id="SM00640">
    <property type="entry name" value="Glyco_32"/>
    <property type="match status" value="1"/>
</dbReference>
<dbReference type="SUPFAM" id="SSF75005">
    <property type="entry name" value="Arabinanase/levansucrase/invertase"/>
    <property type="match status" value="1"/>
</dbReference>
<dbReference type="SUPFAM" id="SSF49899">
    <property type="entry name" value="Concanavalin A-like lectins/glucanases"/>
    <property type="match status" value="1"/>
</dbReference>
<dbReference type="PROSITE" id="PS00609">
    <property type="entry name" value="GLYCOSYL_HYDROL_F32"/>
    <property type="match status" value="1"/>
</dbReference>
<protein>
    <recommendedName>
        <fullName>Acid beta-fructofuranosidase</fullName>
        <ecNumber>3.2.1.26</ecNumber>
    </recommendedName>
    <alternativeName>
        <fullName>Acid invertase</fullName>
        <shortName>AI</shortName>
    </alternativeName>
    <alternativeName>
        <fullName>Acid sucrose hydrolase</fullName>
    </alternativeName>
    <alternativeName>
        <fullName>Vacuolar invertase</fullName>
    </alternativeName>
</protein>
<name>INVA_PHAVU</name>
<feature type="propeptide" id="PRO_0000033389" description="Removed in mature form" evidence="2">
    <location>
        <begin position="1"/>
        <end position="103"/>
    </location>
</feature>
<feature type="chain" id="PRO_0000033390" description="Acid beta-fructofuranosidase">
    <location>
        <begin position="104"/>
        <end position="651"/>
    </location>
</feature>
<feature type="topological domain" description="Cytoplasmic" evidence="9">
    <location>
        <begin position="1"/>
        <end position="23"/>
    </location>
</feature>
<feature type="transmembrane region" description="Helical; Signal-anchor for type II membrane protein" evidence="5">
    <location>
        <begin position="24"/>
        <end position="44"/>
    </location>
</feature>
<feature type="topological domain" description="Lumenal" evidence="9">
    <location>
        <begin position="45"/>
        <end position="651"/>
    </location>
</feature>
<feature type="region of interest" description="Disordered" evidence="8">
    <location>
        <begin position="48"/>
        <end position="76"/>
    </location>
</feature>
<feature type="compositionally biased region" description="Polar residues" evidence="8">
    <location>
        <begin position="54"/>
        <end position="72"/>
    </location>
</feature>
<feature type="active site" evidence="7">
    <location>
        <position position="130"/>
    </location>
</feature>
<feature type="binding site" evidence="4">
    <location>
        <begin position="127"/>
        <end position="130"/>
    </location>
    <ligand>
        <name>substrate</name>
    </ligand>
</feature>
<feature type="binding site" evidence="4">
    <location>
        <position position="146"/>
    </location>
    <ligand>
        <name>substrate</name>
    </ligand>
</feature>
<feature type="binding site" evidence="4">
    <location>
        <position position="154"/>
    </location>
    <ligand>
        <name>substrate</name>
    </ligand>
</feature>
<feature type="binding site" evidence="4">
    <location>
        <begin position="189"/>
        <end position="190"/>
    </location>
    <ligand>
        <name>substrate</name>
    </ligand>
</feature>
<feature type="binding site" evidence="4">
    <location>
        <begin position="253"/>
        <end position="254"/>
    </location>
    <ligand>
        <name>substrate</name>
    </ligand>
</feature>
<feature type="binding site" evidence="4">
    <location>
        <position position="308"/>
    </location>
    <ligand>
        <name>substrate</name>
    </ligand>
</feature>
<feature type="binding site" evidence="4">
    <location>
        <position position="343"/>
    </location>
    <ligand>
        <name>substrate</name>
    </ligand>
</feature>
<feature type="glycosylation site" description="N-linked (GlcNAc...) asparagine" evidence="6">
    <location>
        <position position="210"/>
    </location>
</feature>
<feature type="glycosylation site" description="N-linked (GlcNAc...) asparagine" evidence="6">
    <location>
        <position position="275"/>
    </location>
</feature>
<feature type="glycosylation site" description="N-linked (GlcNAc...) asparagine" evidence="6">
    <location>
        <position position="620"/>
    </location>
</feature>
<feature type="disulfide bond" evidence="4">
    <location>
        <begin position="500"/>
        <end position="548"/>
    </location>
</feature>
<reference key="1">
    <citation type="submission" date="1997-03" db="EMBL/GenBank/DDBJ databases">
        <authorList>
            <person name="Blee K.A."/>
            <person name="Anderson A.J."/>
        </authorList>
    </citation>
    <scope>NUCLEOTIDE SEQUENCE [MRNA]</scope>
</reference>
<evidence type="ECO:0000250" key="1">
    <source>
        <dbReference type="UniProtKB" id="P29001"/>
    </source>
</evidence>
<evidence type="ECO:0000250" key="2">
    <source>
        <dbReference type="UniProtKB" id="P80065"/>
    </source>
</evidence>
<evidence type="ECO:0000250" key="3">
    <source>
        <dbReference type="UniProtKB" id="Q39041"/>
    </source>
</evidence>
<evidence type="ECO:0000250" key="4">
    <source>
        <dbReference type="UniProtKB" id="Q43866"/>
    </source>
</evidence>
<evidence type="ECO:0000255" key="5"/>
<evidence type="ECO:0000255" key="6">
    <source>
        <dbReference type="PROSITE-ProRule" id="PRU00498"/>
    </source>
</evidence>
<evidence type="ECO:0000255" key="7">
    <source>
        <dbReference type="PROSITE-ProRule" id="PRU10067"/>
    </source>
</evidence>
<evidence type="ECO:0000256" key="8">
    <source>
        <dbReference type="SAM" id="MobiDB-lite"/>
    </source>
</evidence>
<evidence type="ECO:0000305" key="9"/>
<keyword id="KW-1015">Disulfide bond</keyword>
<keyword id="KW-0325">Glycoprotein</keyword>
<keyword id="KW-0326">Glycosidase</keyword>
<keyword id="KW-0378">Hydrolase</keyword>
<keyword id="KW-0472">Membrane</keyword>
<keyword id="KW-0735">Signal-anchor</keyword>
<keyword id="KW-0812">Transmembrane</keyword>
<keyword id="KW-1133">Transmembrane helix</keyword>
<keyword id="KW-0926">Vacuole</keyword>
<keyword id="KW-0865">Zymogen</keyword>
<sequence>MEHHKPLLPTSSHAAPNPRTRKDLLLLLCALLFLSSLVAFGRNRASNVPHDHVSSSASNHQQEHQSPTSLPSSKWHAVSRGVSSGVSEKSSSMLFSGEGGASEAFPWDNSMLSWQRTSFHFQPEKNWMNDPNGPMYYKGWYHFFYQYNPNGAVWGDIVWGHAVSRDMIHWLHLPLAMVADQWYDKQGVWTGSATILPNGEIIMLYTGSTNESVQVQNLAYPADPSDPLLVDWIKHPGNPVLVPPPGIGAKDFRDPTTAWLTSEGKWRITIGSKLNKTGIALVYDTDDFKTYELKNGHLRAVPGTGMWECVDFFPVSKKNENGLDTSLSINGAEVKYVMKVSLDDDRHDYYTIGTYDENKVLFTPDDVKNDVGVGLRYDYGIFYASKTFYDQNMDRRILWGWIGESDSEYADVTKGWASVQSIPRTVRLDKKTGSNLLQWPVAEVESLRLRSDEFKSLKAKPGSVVSLDIETATQLDVVAEFEIDAESLQKTAQSNEEFTCSTSGGAAQRGALGPFGLLVLADEGLSEYTPVYFYVIKGRNGNLKTSFCSDQSRSSQPNDVRKQIFGNIVPVLEGEKFSLRMLVDHSIVESFAQGGRTCVTSRVYPTKAIYGAARLFLFNNATEATVTASLKIWQMNSAFIRPFPFNPDQKN</sequence>